<accession>Q1AS21</accession>
<gene>
    <name evidence="1" type="primary">menD</name>
    <name type="ordered locus">Rxyl_2896</name>
</gene>
<organism>
    <name type="scientific">Rubrobacter xylanophilus (strain DSM 9941 / JCM 11954 / NBRC 16129 / PRD-1)</name>
    <dbReference type="NCBI Taxonomy" id="266117"/>
    <lineage>
        <taxon>Bacteria</taxon>
        <taxon>Bacillati</taxon>
        <taxon>Actinomycetota</taxon>
        <taxon>Rubrobacteria</taxon>
        <taxon>Rubrobacterales</taxon>
        <taxon>Rubrobacteraceae</taxon>
        <taxon>Rubrobacter</taxon>
    </lineage>
</organism>
<comment type="function">
    <text evidence="1">Catalyzes the thiamine diphosphate-dependent decarboxylation of 2-oxoglutarate and the subsequent addition of the resulting succinic semialdehyde-thiamine pyrophosphate anion to isochorismate to yield 2-succinyl-5-enolpyruvyl-6-hydroxy-3-cyclohexene-1-carboxylate (SEPHCHC).</text>
</comment>
<comment type="catalytic activity">
    <reaction evidence="1">
        <text>isochorismate + 2-oxoglutarate + H(+) = 5-enolpyruvoyl-6-hydroxy-2-succinyl-cyclohex-3-ene-1-carboxylate + CO2</text>
        <dbReference type="Rhea" id="RHEA:25593"/>
        <dbReference type="ChEBI" id="CHEBI:15378"/>
        <dbReference type="ChEBI" id="CHEBI:16526"/>
        <dbReference type="ChEBI" id="CHEBI:16810"/>
        <dbReference type="ChEBI" id="CHEBI:29780"/>
        <dbReference type="ChEBI" id="CHEBI:58818"/>
        <dbReference type="EC" id="2.2.1.9"/>
    </reaction>
</comment>
<comment type="cofactor">
    <cofactor evidence="1">
        <name>Mg(2+)</name>
        <dbReference type="ChEBI" id="CHEBI:18420"/>
    </cofactor>
    <cofactor evidence="1">
        <name>Mn(2+)</name>
        <dbReference type="ChEBI" id="CHEBI:29035"/>
    </cofactor>
</comment>
<comment type="cofactor">
    <cofactor evidence="1">
        <name>thiamine diphosphate</name>
        <dbReference type="ChEBI" id="CHEBI:58937"/>
    </cofactor>
    <text evidence="1">Binds 1 thiamine pyrophosphate per subunit.</text>
</comment>
<comment type="pathway">
    <text evidence="1">Quinol/quinone metabolism; 1,4-dihydroxy-2-naphthoate biosynthesis; 1,4-dihydroxy-2-naphthoate from chorismate: step 2/7.</text>
</comment>
<comment type="pathway">
    <text evidence="1">Quinol/quinone metabolism; menaquinone biosynthesis.</text>
</comment>
<comment type="subunit">
    <text evidence="1">Homodimer.</text>
</comment>
<comment type="similarity">
    <text evidence="1">Belongs to the TPP enzyme family. MenD subfamily.</text>
</comment>
<keyword id="KW-0460">Magnesium</keyword>
<keyword id="KW-0464">Manganese</keyword>
<keyword id="KW-0474">Menaquinone biosynthesis</keyword>
<keyword id="KW-0479">Metal-binding</keyword>
<keyword id="KW-1185">Reference proteome</keyword>
<keyword id="KW-0786">Thiamine pyrophosphate</keyword>
<keyword id="KW-0808">Transferase</keyword>
<feature type="chain" id="PRO_0000341817" description="2-succinyl-5-enolpyruvyl-6-hydroxy-3-cyclohexene-1-carboxylate synthase">
    <location>
        <begin position="1"/>
        <end position="574"/>
    </location>
</feature>
<evidence type="ECO:0000255" key="1">
    <source>
        <dbReference type="HAMAP-Rule" id="MF_01659"/>
    </source>
</evidence>
<name>MEND_RUBXD</name>
<dbReference type="EC" id="2.2.1.9" evidence="1"/>
<dbReference type="EMBL" id="CP000386">
    <property type="protein sequence ID" value="ABG05807.1"/>
    <property type="molecule type" value="Genomic_DNA"/>
</dbReference>
<dbReference type="RefSeq" id="WP_011565816.1">
    <property type="nucleotide sequence ID" value="NC_008148.1"/>
</dbReference>
<dbReference type="SMR" id="Q1AS21"/>
<dbReference type="STRING" id="266117.Rxyl_2896"/>
<dbReference type="KEGG" id="rxy:Rxyl_2896"/>
<dbReference type="eggNOG" id="COG1165">
    <property type="taxonomic scope" value="Bacteria"/>
</dbReference>
<dbReference type="HOGENOM" id="CLU_006051_3_0_11"/>
<dbReference type="OrthoDB" id="9791859at2"/>
<dbReference type="PhylomeDB" id="Q1AS21"/>
<dbReference type="UniPathway" id="UPA00079"/>
<dbReference type="UniPathway" id="UPA01057">
    <property type="reaction ID" value="UER00164"/>
</dbReference>
<dbReference type="Proteomes" id="UP000006637">
    <property type="component" value="Chromosome"/>
</dbReference>
<dbReference type="GO" id="GO:0070204">
    <property type="term" value="F:2-succinyl-5-enolpyruvyl-6-hydroxy-3-cyclohexene-1-carboxylic-acid synthase activity"/>
    <property type="evidence" value="ECO:0007669"/>
    <property type="project" value="UniProtKB-UniRule"/>
</dbReference>
<dbReference type="GO" id="GO:0000287">
    <property type="term" value="F:magnesium ion binding"/>
    <property type="evidence" value="ECO:0007669"/>
    <property type="project" value="UniProtKB-UniRule"/>
</dbReference>
<dbReference type="GO" id="GO:0030145">
    <property type="term" value="F:manganese ion binding"/>
    <property type="evidence" value="ECO:0007669"/>
    <property type="project" value="UniProtKB-UniRule"/>
</dbReference>
<dbReference type="GO" id="GO:0030976">
    <property type="term" value="F:thiamine pyrophosphate binding"/>
    <property type="evidence" value="ECO:0007669"/>
    <property type="project" value="UniProtKB-UniRule"/>
</dbReference>
<dbReference type="GO" id="GO:0009234">
    <property type="term" value="P:menaquinone biosynthetic process"/>
    <property type="evidence" value="ECO:0007669"/>
    <property type="project" value="UniProtKB-UniRule"/>
</dbReference>
<dbReference type="CDD" id="cd07037">
    <property type="entry name" value="TPP_PYR_MenD"/>
    <property type="match status" value="1"/>
</dbReference>
<dbReference type="CDD" id="cd02009">
    <property type="entry name" value="TPP_SHCHC_synthase"/>
    <property type="match status" value="1"/>
</dbReference>
<dbReference type="Gene3D" id="3.40.50.970">
    <property type="match status" value="2"/>
</dbReference>
<dbReference type="Gene3D" id="3.40.50.1220">
    <property type="entry name" value="TPP-binding domain"/>
    <property type="match status" value="1"/>
</dbReference>
<dbReference type="HAMAP" id="MF_01659">
    <property type="entry name" value="MenD"/>
    <property type="match status" value="1"/>
</dbReference>
<dbReference type="InterPro" id="IPR029035">
    <property type="entry name" value="DHS-like_NAD/FAD-binding_dom"/>
</dbReference>
<dbReference type="InterPro" id="IPR004433">
    <property type="entry name" value="MenaQ_synth_MenD"/>
</dbReference>
<dbReference type="InterPro" id="IPR032264">
    <property type="entry name" value="MenD_middle"/>
</dbReference>
<dbReference type="InterPro" id="IPR029061">
    <property type="entry name" value="THDP-binding"/>
</dbReference>
<dbReference type="InterPro" id="IPR012001">
    <property type="entry name" value="Thiamin_PyroP_enz_TPP-bd_dom"/>
</dbReference>
<dbReference type="InterPro" id="IPR011766">
    <property type="entry name" value="TPP_enzyme_TPP-bd"/>
</dbReference>
<dbReference type="NCBIfam" id="TIGR00173">
    <property type="entry name" value="menD"/>
    <property type="match status" value="1"/>
</dbReference>
<dbReference type="PANTHER" id="PTHR42916">
    <property type="entry name" value="2-SUCCINYL-5-ENOLPYRUVYL-6-HYDROXY-3-CYCLOHEXENE-1-CARBOXYLATE SYNTHASE"/>
    <property type="match status" value="1"/>
</dbReference>
<dbReference type="PANTHER" id="PTHR42916:SF1">
    <property type="entry name" value="PROTEIN PHYLLO, CHLOROPLASTIC"/>
    <property type="match status" value="1"/>
</dbReference>
<dbReference type="Pfam" id="PF02775">
    <property type="entry name" value="TPP_enzyme_C"/>
    <property type="match status" value="1"/>
</dbReference>
<dbReference type="Pfam" id="PF16582">
    <property type="entry name" value="TPP_enzyme_M_2"/>
    <property type="match status" value="1"/>
</dbReference>
<dbReference type="Pfam" id="PF02776">
    <property type="entry name" value="TPP_enzyme_N"/>
    <property type="match status" value="1"/>
</dbReference>
<dbReference type="PIRSF" id="PIRSF004983">
    <property type="entry name" value="MenD"/>
    <property type="match status" value="1"/>
</dbReference>
<dbReference type="SUPFAM" id="SSF52467">
    <property type="entry name" value="DHS-like NAD/FAD-binding domain"/>
    <property type="match status" value="1"/>
</dbReference>
<dbReference type="SUPFAM" id="SSF52518">
    <property type="entry name" value="Thiamin diphosphate-binding fold (THDP-binding)"/>
    <property type="match status" value="2"/>
</dbReference>
<proteinExistence type="inferred from homology"/>
<reference key="1">
    <citation type="submission" date="2006-06" db="EMBL/GenBank/DDBJ databases">
        <title>Complete sequence of Rubrobacter xylanophilus DSM 9941.</title>
        <authorList>
            <consortium name="US DOE Joint Genome Institute"/>
            <person name="Copeland A."/>
            <person name="Lucas S."/>
            <person name="Lapidus A."/>
            <person name="Barry K."/>
            <person name="Detter J.C."/>
            <person name="Glavina del Rio T."/>
            <person name="Hammon N."/>
            <person name="Israni S."/>
            <person name="Dalin E."/>
            <person name="Tice H."/>
            <person name="Pitluck S."/>
            <person name="Munk A.C."/>
            <person name="Brettin T."/>
            <person name="Bruce D."/>
            <person name="Han C."/>
            <person name="Tapia R."/>
            <person name="Gilna P."/>
            <person name="Schmutz J."/>
            <person name="Larimer F."/>
            <person name="Land M."/>
            <person name="Hauser L."/>
            <person name="Kyrpides N."/>
            <person name="Lykidis A."/>
            <person name="da Costa M.S."/>
            <person name="Rainey F.A."/>
            <person name="Empadinhas N."/>
            <person name="Jolivet E."/>
            <person name="Battista J.R."/>
            <person name="Richardson P."/>
        </authorList>
    </citation>
    <scope>NUCLEOTIDE SEQUENCE [LARGE SCALE GENOMIC DNA]</scope>
    <source>
        <strain>DSM 9941 / JCM 11954 / NBRC 16129 / PRD-1</strain>
    </source>
</reference>
<sequence>MRDGTPRANRLWGRLLVEELLRCGVGLFCVAPGSRSTPLVAAIAEHPRARALVHYDERGTAFAALGYARATGRPAAWVTTSGTAVANGLPAVAEAATDCVPMLLLTADRPPELRHTGANQTIEQPGIFGGYARWSFDVPPPGPDQDPATVLTTVDQAVYRSQRPPAGPVHLNLMFREPFLPQPAQPDGLPDLWPGDGPYTRYARAAPVPDEAEVRELASALGAAERGVVVAGRLRSRKQGEAAARLAAALGWPLLPDICSQARLGARPEVSAPYHDLLLAGGRFPGGRAPDAVVRVGGVPVSKRLQRYVTGRKPATYAVVADHPFRSDPEHLATHRLEADVAELCAALAGRVRRAAAPGWLSGWLRASGEAGRRLEAALRERKGLSEPGVARLVSRLIPEDHALVAASSMPVRDLDTFADPEGPPVPVAANRGASGIDGTVATAAGFARGAGRPVTLLIGDLALLHDLNSLAMLRGLPAVVVVLNNDGGGIFHFLPVAEHGGIFEPYFGTPHGLGFRQAAEMFGLGYSGPRTAGELSLAYQRACAEGGPHLIEVVTDRRENLALHRELLRGAAG</sequence>
<protein>
    <recommendedName>
        <fullName evidence="1">2-succinyl-5-enolpyruvyl-6-hydroxy-3-cyclohexene-1-carboxylate synthase</fullName>
        <shortName evidence="1">SEPHCHC synthase</shortName>
        <ecNumber evidence="1">2.2.1.9</ecNumber>
    </recommendedName>
    <alternativeName>
        <fullName evidence="1">Menaquinone biosynthesis protein MenD</fullName>
    </alternativeName>
</protein>